<sequence>MKFFVDTADIDAIRELHELGMVDGVTTNPSLIMKSGRDIKEVTAEICALVDGPVSAETVALDADGMINEGRELAKIADNITIKVPLTWAGLQACKVLSGEGRMVNVTLCFSANQALLAAKAGATFISPFVGRLDDLNMDGMDLIAEIRQIYDNYGFETEILVASIRSANHMKDAALIGADVATAPPGVIKAMANHVMTDKGLDAFMADWAKTGQSIV</sequence>
<evidence type="ECO:0000255" key="1">
    <source>
        <dbReference type="HAMAP-Rule" id="MF_00494"/>
    </source>
</evidence>
<dbReference type="EC" id="2.2.1.2" evidence="1"/>
<dbReference type="EMBL" id="CP000264">
    <property type="protein sequence ID" value="ABD53949.1"/>
    <property type="molecule type" value="Genomic_DNA"/>
</dbReference>
<dbReference type="RefSeq" id="WP_011454156.1">
    <property type="nucleotide sequence ID" value="NC_007802.1"/>
</dbReference>
<dbReference type="SMR" id="Q28TL3"/>
<dbReference type="STRING" id="290400.Jann_1032"/>
<dbReference type="KEGG" id="jan:Jann_1032"/>
<dbReference type="eggNOG" id="COG0176">
    <property type="taxonomic scope" value="Bacteria"/>
</dbReference>
<dbReference type="HOGENOM" id="CLU_079764_0_0_5"/>
<dbReference type="OrthoDB" id="9807051at2"/>
<dbReference type="UniPathway" id="UPA00115">
    <property type="reaction ID" value="UER00414"/>
</dbReference>
<dbReference type="Proteomes" id="UP000008326">
    <property type="component" value="Chromosome"/>
</dbReference>
<dbReference type="GO" id="GO:0005737">
    <property type="term" value="C:cytoplasm"/>
    <property type="evidence" value="ECO:0007669"/>
    <property type="project" value="UniProtKB-SubCell"/>
</dbReference>
<dbReference type="GO" id="GO:0016832">
    <property type="term" value="F:aldehyde-lyase activity"/>
    <property type="evidence" value="ECO:0007669"/>
    <property type="project" value="InterPro"/>
</dbReference>
<dbReference type="GO" id="GO:0004801">
    <property type="term" value="F:transaldolase activity"/>
    <property type="evidence" value="ECO:0007669"/>
    <property type="project" value="UniProtKB-UniRule"/>
</dbReference>
<dbReference type="GO" id="GO:0005975">
    <property type="term" value="P:carbohydrate metabolic process"/>
    <property type="evidence" value="ECO:0007669"/>
    <property type="project" value="InterPro"/>
</dbReference>
<dbReference type="GO" id="GO:0006098">
    <property type="term" value="P:pentose-phosphate shunt"/>
    <property type="evidence" value="ECO:0007669"/>
    <property type="project" value="UniProtKB-UniRule"/>
</dbReference>
<dbReference type="CDD" id="cd00956">
    <property type="entry name" value="Transaldolase_FSA"/>
    <property type="match status" value="1"/>
</dbReference>
<dbReference type="FunFam" id="3.20.20.70:FF:000018">
    <property type="entry name" value="Probable transaldolase"/>
    <property type="match status" value="1"/>
</dbReference>
<dbReference type="Gene3D" id="3.20.20.70">
    <property type="entry name" value="Aldolase class I"/>
    <property type="match status" value="1"/>
</dbReference>
<dbReference type="HAMAP" id="MF_00494">
    <property type="entry name" value="Transaldolase_3b"/>
    <property type="match status" value="1"/>
</dbReference>
<dbReference type="InterPro" id="IPR013785">
    <property type="entry name" value="Aldolase_TIM"/>
</dbReference>
<dbReference type="InterPro" id="IPR001585">
    <property type="entry name" value="TAL/FSA"/>
</dbReference>
<dbReference type="InterPro" id="IPR022999">
    <property type="entry name" value="Transaldolase_3B"/>
</dbReference>
<dbReference type="InterPro" id="IPR004731">
    <property type="entry name" value="Transaldolase_3B/F6P_aldolase"/>
</dbReference>
<dbReference type="InterPro" id="IPR018225">
    <property type="entry name" value="Transaldolase_AS"/>
</dbReference>
<dbReference type="InterPro" id="IPR033919">
    <property type="entry name" value="TSA/FSA_arc/bac"/>
</dbReference>
<dbReference type="NCBIfam" id="TIGR00875">
    <property type="entry name" value="fsa_talC_mipB"/>
    <property type="match status" value="1"/>
</dbReference>
<dbReference type="PANTHER" id="PTHR10683:SF40">
    <property type="entry name" value="FRUCTOSE-6-PHOSPHATE ALDOLASE 1-RELATED"/>
    <property type="match status" value="1"/>
</dbReference>
<dbReference type="PANTHER" id="PTHR10683">
    <property type="entry name" value="TRANSALDOLASE"/>
    <property type="match status" value="1"/>
</dbReference>
<dbReference type="Pfam" id="PF00923">
    <property type="entry name" value="TAL_FSA"/>
    <property type="match status" value="1"/>
</dbReference>
<dbReference type="SUPFAM" id="SSF51569">
    <property type="entry name" value="Aldolase"/>
    <property type="match status" value="1"/>
</dbReference>
<dbReference type="PROSITE" id="PS01054">
    <property type="entry name" value="TRANSALDOLASE_1"/>
    <property type="match status" value="1"/>
</dbReference>
<dbReference type="PROSITE" id="PS00958">
    <property type="entry name" value="TRANSALDOLASE_2"/>
    <property type="match status" value="1"/>
</dbReference>
<name>TAL_JANSC</name>
<comment type="function">
    <text evidence="1">Transaldolase is important for the balance of metabolites in the pentose-phosphate pathway.</text>
</comment>
<comment type="catalytic activity">
    <reaction evidence="1">
        <text>D-sedoheptulose 7-phosphate + D-glyceraldehyde 3-phosphate = D-erythrose 4-phosphate + beta-D-fructose 6-phosphate</text>
        <dbReference type="Rhea" id="RHEA:17053"/>
        <dbReference type="ChEBI" id="CHEBI:16897"/>
        <dbReference type="ChEBI" id="CHEBI:57483"/>
        <dbReference type="ChEBI" id="CHEBI:57634"/>
        <dbReference type="ChEBI" id="CHEBI:59776"/>
        <dbReference type="EC" id="2.2.1.2"/>
    </reaction>
</comment>
<comment type="pathway">
    <text evidence="1">Carbohydrate degradation; pentose phosphate pathway; D-glyceraldehyde 3-phosphate and beta-D-fructose 6-phosphate from D-ribose 5-phosphate and D-xylulose 5-phosphate (non-oxidative stage): step 2/3.</text>
</comment>
<comment type="subcellular location">
    <subcellularLocation>
        <location evidence="1">Cytoplasm</location>
    </subcellularLocation>
</comment>
<comment type="similarity">
    <text evidence="1">Belongs to the transaldolase family. Type 3B subfamily.</text>
</comment>
<keyword id="KW-0963">Cytoplasm</keyword>
<keyword id="KW-0570">Pentose shunt</keyword>
<keyword id="KW-1185">Reference proteome</keyword>
<keyword id="KW-0704">Schiff base</keyword>
<keyword id="KW-0808">Transferase</keyword>
<organism>
    <name type="scientific">Jannaschia sp. (strain CCS1)</name>
    <dbReference type="NCBI Taxonomy" id="290400"/>
    <lineage>
        <taxon>Bacteria</taxon>
        <taxon>Pseudomonadati</taxon>
        <taxon>Pseudomonadota</taxon>
        <taxon>Alphaproteobacteria</taxon>
        <taxon>Rhodobacterales</taxon>
        <taxon>Roseobacteraceae</taxon>
        <taxon>Jannaschia</taxon>
    </lineage>
</organism>
<accession>Q28TL3</accession>
<protein>
    <recommendedName>
        <fullName evidence="1">Probable transaldolase</fullName>
        <ecNumber evidence="1">2.2.1.2</ecNumber>
    </recommendedName>
</protein>
<feature type="chain" id="PRO_1000126323" description="Probable transaldolase">
    <location>
        <begin position="1"/>
        <end position="217"/>
    </location>
</feature>
<feature type="active site" description="Schiff-base intermediate with substrate" evidence="1">
    <location>
        <position position="83"/>
    </location>
</feature>
<reference key="1">
    <citation type="submission" date="2006-02" db="EMBL/GenBank/DDBJ databases">
        <title>Complete sequence of chromosome of Jannaschia sp. CCS1.</title>
        <authorList>
            <consortium name="US DOE Joint Genome Institute"/>
            <person name="Copeland A."/>
            <person name="Lucas S."/>
            <person name="Lapidus A."/>
            <person name="Barry K."/>
            <person name="Detter J.C."/>
            <person name="Glavina del Rio T."/>
            <person name="Hammon N."/>
            <person name="Israni S."/>
            <person name="Pitluck S."/>
            <person name="Brettin T."/>
            <person name="Bruce D."/>
            <person name="Han C."/>
            <person name="Tapia R."/>
            <person name="Gilna P."/>
            <person name="Chertkov O."/>
            <person name="Saunders E."/>
            <person name="Schmutz J."/>
            <person name="Larimer F."/>
            <person name="Land M."/>
            <person name="Kyrpides N."/>
            <person name="Lykidis A."/>
            <person name="Moran M.A."/>
            <person name="Belas R."/>
            <person name="Ye W."/>
            <person name="Buchan A."/>
            <person name="Gonzalez J.M."/>
            <person name="Schell M.A."/>
            <person name="Richardson P."/>
        </authorList>
    </citation>
    <scope>NUCLEOTIDE SEQUENCE [LARGE SCALE GENOMIC DNA]</scope>
    <source>
        <strain>CCS1</strain>
    </source>
</reference>
<proteinExistence type="inferred from homology"/>
<gene>
    <name evidence="1" type="primary">tal</name>
    <name type="ordered locus">Jann_1032</name>
</gene>